<reference key="1">
    <citation type="submission" date="2007-04" db="EMBL/GenBank/DDBJ databases">
        <title>Complete sequence of Shewanella putrefaciens CN-32.</title>
        <authorList>
            <consortium name="US DOE Joint Genome Institute"/>
            <person name="Copeland A."/>
            <person name="Lucas S."/>
            <person name="Lapidus A."/>
            <person name="Barry K."/>
            <person name="Detter J.C."/>
            <person name="Glavina del Rio T."/>
            <person name="Hammon N."/>
            <person name="Israni S."/>
            <person name="Dalin E."/>
            <person name="Tice H."/>
            <person name="Pitluck S."/>
            <person name="Chain P."/>
            <person name="Malfatti S."/>
            <person name="Shin M."/>
            <person name="Vergez L."/>
            <person name="Schmutz J."/>
            <person name="Larimer F."/>
            <person name="Land M."/>
            <person name="Hauser L."/>
            <person name="Kyrpides N."/>
            <person name="Mikhailova N."/>
            <person name="Romine M.F."/>
            <person name="Fredrickson J."/>
            <person name="Tiedje J."/>
            <person name="Richardson P."/>
        </authorList>
    </citation>
    <scope>NUCLEOTIDE SEQUENCE [LARGE SCALE GENOMIC DNA]</scope>
    <source>
        <strain>CN-32 / ATCC BAA-453</strain>
    </source>
</reference>
<protein>
    <recommendedName>
        <fullName evidence="1">Cysteine--tRNA ligase</fullName>
        <ecNumber evidence="1">6.1.1.16</ecNumber>
    </recommendedName>
    <alternativeName>
        <fullName evidence="1">Cysteinyl-tRNA synthetase</fullName>
        <shortName evidence="1">CysRS</shortName>
    </alternativeName>
</protein>
<keyword id="KW-0030">Aminoacyl-tRNA synthetase</keyword>
<keyword id="KW-0067">ATP-binding</keyword>
<keyword id="KW-0963">Cytoplasm</keyword>
<keyword id="KW-0436">Ligase</keyword>
<keyword id="KW-0479">Metal-binding</keyword>
<keyword id="KW-0547">Nucleotide-binding</keyword>
<keyword id="KW-0648">Protein biosynthesis</keyword>
<keyword id="KW-0862">Zinc</keyword>
<comment type="catalytic activity">
    <reaction evidence="1">
        <text>tRNA(Cys) + L-cysteine + ATP = L-cysteinyl-tRNA(Cys) + AMP + diphosphate</text>
        <dbReference type="Rhea" id="RHEA:17773"/>
        <dbReference type="Rhea" id="RHEA-COMP:9661"/>
        <dbReference type="Rhea" id="RHEA-COMP:9679"/>
        <dbReference type="ChEBI" id="CHEBI:30616"/>
        <dbReference type="ChEBI" id="CHEBI:33019"/>
        <dbReference type="ChEBI" id="CHEBI:35235"/>
        <dbReference type="ChEBI" id="CHEBI:78442"/>
        <dbReference type="ChEBI" id="CHEBI:78517"/>
        <dbReference type="ChEBI" id="CHEBI:456215"/>
        <dbReference type="EC" id="6.1.1.16"/>
    </reaction>
</comment>
<comment type="cofactor">
    <cofactor evidence="1">
        <name>Zn(2+)</name>
        <dbReference type="ChEBI" id="CHEBI:29105"/>
    </cofactor>
    <text evidence="1">Binds 1 zinc ion per subunit.</text>
</comment>
<comment type="subunit">
    <text evidence="1">Monomer.</text>
</comment>
<comment type="subcellular location">
    <subcellularLocation>
        <location evidence="1">Cytoplasm</location>
    </subcellularLocation>
</comment>
<comment type="similarity">
    <text evidence="1">Belongs to the class-I aminoacyl-tRNA synthetase family.</text>
</comment>
<evidence type="ECO:0000255" key="1">
    <source>
        <dbReference type="HAMAP-Rule" id="MF_00041"/>
    </source>
</evidence>
<sequence length="461" mass="52156">MPMLKIYNSITRQKQEFKPINPGKIGMYVCGVTIYDLCHIGHGRTFVSFDMIVRYLRYVGYEVNFQRNITDVDDKIIKRANENNESCEALTERLIGEMHRDFDALNMLRPDFEPRATLHIAEIIDMVELLLARGHAYVASDGDVLFSVASYPDYGRLSGQNLDQLQAGARVEVDENKQNPMDFVLWKMSKPGEPTWESPWGPGRPGWHIECSAMNSKHLGLHFDIHGGGSDLQFPHHENEIAQSCCAHDTPYVNYWMHTGMVMVDREKMSKSLGNFFTIRDVLGHYDAETVRYFLLSGHYRSQLNYSEDNLKQARSALERLYTAIKDVDLTVAAAPAEEFIVKFKAAMDDDFNTPEAYSVLFDMVRDINRLKATDIAKASALAVAMKQLADVLGLLGQDPDAFFKGEGSDDEVAEIEALIVERNRARSEKDWAAADVARNRLDILGVVLEDGPSGTTWRKK</sequence>
<gene>
    <name evidence="1" type="primary">cysS</name>
    <name type="ordered locus">Sputcn32_1487</name>
</gene>
<feature type="chain" id="PRO_1000006608" description="Cysteine--tRNA ligase">
    <location>
        <begin position="1"/>
        <end position="461"/>
    </location>
</feature>
<feature type="short sequence motif" description="'HIGH' region">
    <location>
        <begin position="32"/>
        <end position="42"/>
    </location>
</feature>
<feature type="short sequence motif" description="'KMSKS' region">
    <location>
        <begin position="268"/>
        <end position="272"/>
    </location>
</feature>
<feature type="binding site" evidence="1">
    <location>
        <position position="30"/>
    </location>
    <ligand>
        <name>Zn(2+)</name>
        <dbReference type="ChEBI" id="CHEBI:29105"/>
    </ligand>
</feature>
<feature type="binding site" evidence="1">
    <location>
        <position position="211"/>
    </location>
    <ligand>
        <name>Zn(2+)</name>
        <dbReference type="ChEBI" id="CHEBI:29105"/>
    </ligand>
</feature>
<feature type="binding site" evidence="1">
    <location>
        <position position="236"/>
    </location>
    <ligand>
        <name>Zn(2+)</name>
        <dbReference type="ChEBI" id="CHEBI:29105"/>
    </ligand>
</feature>
<feature type="binding site" evidence="1">
    <location>
        <position position="240"/>
    </location>
    <ligand>
        <name>Zn(2+)</name>
        <dbReference type="ChEBI" id="CHEBI:29105"/>
    </ligand>
</feature>
<feature type="binding site" evidence="1">
    <location>
        <position position="271"/>
    </location>
    <ligand>
        <name>ATP</name>
        <dbReference type="ChEBI" id="CHEBI:30616"/>
    </ligand>
</feature>
<name>SYC_SHEPC</name>
<organism>
    <name type="scientific">Shewanella putrefaciens (strain CN-32 / ATCC BAA-453)</name>
    <dbReference type="NCBI Taxonomy" id="319224"/>
    <lineage>
        <taxon>Bacteria</taxon>
        <taxon>Pseudomonadati</taxon>
        <taxon>Pseudomonadota</taxon>
        <taxon>Gammaproteobacteria</taxon>
        <taxon>Alteromonadales</taxon>
        <taxon>Shewanellaceae</taxon>
        <taxon>Shewanella</taxon>
    </lineage>
</organism>
<proteinExistence type="inferred from homology"/>
<accession>A4Y5H9</accession>
<dbReference type="EC" id="6.1.1.16" evidence="1"/>
<dbReference type="EMBL" id="CP000681">
    <property type="protein sequence ID" value="ABP75212.1"/>
    <property type="molecule type" value="Genomic_DNA"/>
</dbReference>
<dbReference type="SMR" id="A4Y5H9"/>
<dbReference type="STRING" id="319224.Sputcn32_1487"/>
<dbReference type="KEGG" id="spc:Sputcn32_1487"/>
<dbReference type="eggNOG" id="COG0215">
    <property type="taxonomic scope" value="Bacteria"/>
</dbReference>
<dbReference type="HOGENOM" id="CLU_013528_0_1_6"/>
<dbReference type="GO" id="GO:0005829">
    <property type="term" value="C:cytosol"/>
    <property type="evidence" value="ECO:0007669"/>
    <property type="project" value="TreeGrafter"/>
</dbReference>
<dbReference type="GO" id="GO:0005524">
    <property type="term" value="F:ATP binding"/>
    <property type="evidence" value="ECO:0007669"/>
    <property type="project" value="UniProtKB-UniRule"/>
</dbReference>
<dbReference type="GO" id="GO:0004817">
    <property type="term" value="F:cysteine-tRNA ligase activity"/>
    <property type="evidence" value="ECO:0007669"/>
    <property type="project" value="UniProtKB-UniRule"/>
</dbReference>
<dbReference type="GO" id="GO:0008270">
    <property type="term" value="F:zinc ion binding"/>
    <property type="evidence" value="ECO:0007669"/>
    <property type="project" value="UniProtKB-UniRule"/>
</dbReference>
<dbReference type="GO" id="GO:0006423">
    <property type="term" value="P:cysteinyl-tRNA aminoacylation"/>
    <property type="evidence" value="ECO:0007669"/>
    <property type="project" value="UniProtKB-UniRule"/>
</dbReference>
<dbReference type="CDD" id="cd07963">
    <property type="entry name" value="Anticodon_Ia_Cys"/>
    <property type="match status" value="1"/>
</dbReference>
<dbReference type="CDD" id="cd00672">
    <property type="entry name" value="CysRS_core"/>
    <property type="match status" value="1"/>
</dbReference>
<dbReference type="FunFam" id="1.20.120.1910:FF:000001">
    <property type="entry name" value="Cysteine--tRNA ligase"/>
    <property type="match status" value="1"/>
</dbReference>
<dbReference type="FunFam" id="3.40.50.620:FF:000009">
    <property type="entry name" value="Cysteine--tRNA ligase"/>
    <property type="match status" value="1"/>
</dbReference>
<dbReference type="Gene3D" id="1.20.120.1910">
    <property type="entry name" value="Cysteine-tRNA ligase, C-terminal anti-codon recognition domain"/>
    <property type="match status" value="1"/>
</dbReference>
<dbReference type="Gene3D" id="3.40.50.620">
    <property type="entry name" value="HUPs"/>
    <property type="match status" value="1"/>
</dbReference>
<dbReference type="HAMAP" id="MF_00041">
    <property type="entry name" value="Cys_tRNA_synth"/>
    <property type="match status" value="1"/>
</dbReference>
<dbReference type="InterPro" id="IPR015803">
    <property type="entry name" value="Cys-tRNA-ligase"/>
</dbReference>
<dbReference type="InterPro" id="IPR015273">
    <property type="entry name" value="Cys-tRNA-synt_Ia_DALR"/>
</dbReference>
<dbReference type="InterPro" id="IPR024909">
    <property type="entry name" value="Cys-tRNA/MSH_ligase"/>
</dbReference>
<dbReference type="InterPro" id="IPR056411">
    <property type="entry name" value="CysS_C"/>
</dbReference>
<dbReference type="InterPro" id="IPR014729">
    <property type="entry name" value="Rossmann-like_a/b/a_fold"/>
</dbReference>
<dbReference type="InterPro" id="IPR032678">
    <property type="entry name" value="tRNA-synt_1_cat_dom"/>
</dbReference>
<dbReference type="InterPro" id="IPR009080">
    <property type="entry name" value="tRNAsynth_Ia_anticodon-bd"/>
</dbReference>
<dbReference type="NCBIfam" id="TIGR00435">
    <property type="entry name" value="cysS"/>
    <property type="match status" value="1"/>
</dbReference>
<dbReference type="PANTHER" id="PTHR10890:SF3">
    <property type="entry name" value="CYSTEINE--TRNA LIGASE, CYTOPLASMIC"/>
    <property type="match status" value="1"/>
</dbReference>
<dbReference type="PANTHER" id="PTHR10890">
    <property type="entry name" value="CYSTEINYL-TRNA SYNTHETASE"/>
    <property type="match status" value="1"/>
</dbReference>
<dbReference type="Pfam" id="PF23493">
    <property type="entry name" value="CysS_C"/>
    <property type="match status" value="1"/>
</dbReference>
<dbReference type="Pfam" id="PF09190">
    <property type="entry name" value="DALR_2"/>
    <property type="match status" value="1"/>
</dbReference>
<dbReference type="Pfam" id="PF01406">
    <property type="entry name" value="tRNA-synt_1e"/>
    <property type="match status" value="1"/>
</dbReference>
<dbReference type="PRINTS" id="PR00983">
    <property type="entry name" value="TRNASYNTHCYS"/>
</dbReference>
<dbReference type="SMART" id="SM00840">
    <property type="entry name" value="DALR_2"/>
    <property type="match status" value="1"/>
</dbReference>
<dbReference type="SUPFAM" id="SSF47323">
    <property type="entry name" value="Anticodon-binding domain of a subclass of class I aminoacyl-tRNA synthetases"/>
    <property type="match status" value="1"/>
</dbReference>
<dbReference type="SUPFAM" id="SSF52374">
    <property type="entry name" value="Nucleotidylyl transferase"/>
    <property type="match status" value="1"/>
</dbReference>